<evidence type="ECO:0000250" key="1"/>
<evidence type="ECO:0000250" key="2">
    <source>
        <dbReference type="UniProtKB" id="P02470"/>
    </source>
</evidence>
<evidence type="ECO:0000250" key="3">
    <source>
        <dbReference type="UniProtKB" id="P02489"/>
    </source>
</evidence>
<evidence type="ECO:0000255" key="4">
    <source>
        <dbReference type="PROSITE-ProRule" id="PRU00285"/>
    </source>
</evidence>
<evidence type="ECO:0000256" key="5">
    <source>
        <dbReference type="SAM" id="MobiDB-lite"/>
    </source>
</evidence>
<evidence type="ECO:0000269" key="6">
    <source>
    </source>
</evidence>
<evidence type="ECO:0000269" key="7">
    <source>
    </source>
</evidence>
<evidence type="ECO:0000269" key="8">
    <source>
    </source>
</evidence>
<evidence type="ECO:0000269" key="9">
    <source>
    </source>
</evidence>
<evidence type="ECO:0000269" key="10">
    <source>
    </source>
</evidence>
<evidence type="ECO:0000269" key="11">
    <source ref="5"/>
</evidence>
<evidence type="ECO:0000303" key="12">
    <source>
    </source>
</evidence>
<evidence type="ECO:0000303" key="13">
    <source>
    </source>
</evidence>
<evidence type="ECO:0000303" key="14">
    <source>
    </source>
</evidence>
<evidence type="ECO:0000303" key="15">
    <source>
    </source>
</evidence>
<evidence type="ECO:0000305" key="16"/>
<evidence type="ECO:0000305" key="17">
    <source>
    </source>
</evidence>
<proteinExistence type="evidence at protein level"/>
<keyword id="KW-0007">Acetylation</keyword>
<keyword id="KW-0025">Alternative splicing</keyword>
<keyword id="KW-0143">Chaperone</keyword>
<keyword id="KW-0963">Cytoplasm</keyword>
<keyword id="KW-0903">Direct protein sequencing</keyword>
<keyword id="KW-0273">Eye lens protein</keyword>
<keyword id="KW-0325">Glycoprotein</keyword>
<keyword id="KW-0479">Metal-binding</keyword>
<keyword id="KW-0488">Methylation</keyword>
<keyword id="KW-0539">Nucleus</keyword>
<keyword id="KW-0597">Phosphoprotein</keyword>
<keyword id="KW-1185">Reference proteome</keyword>
<keyword id="KW-0862">Zinc</keyword>
<comment type="function">
    <text evidence="3 6">Contributes to the transparency and refractive index of the lens (By similarity). Acts as a chaperone, preventing aggregation of various proteins under a wide range of stress conditions (PubMed:12118077). Required for the correct formation of lens intermediate filaments as part of a complex composed of BFSP1, BFSP2 and CRYAA (By similarity).</text>
</comment>
<comment type="function">
    <molecule>Isoform 1</molecule>
    <text evidence="10">Inhibits bacterial growth in the lens.</text>
</comment>
<comment type="subunit">
    <text evidence="2 3">Heteropolymer composed of three CRYAA and one CRYAB subunits. Inter-subunit bridging via zinc ions enhances stability, which is crucial as there is no protein turn over in the lens. Can also form homodimers and homotetramers (dimers of dimers) which serve as the building blocks of homooligomers (By similarity). Within homooligomers, the zinc-binding motif is created from residues of 3 different molecules. His-123 and Glu-125 from one molecule are ligands of the zinc ion, and His-130 and His-177 residues from additional molecules complete the site with tetrahedral coordination geometry (By similarity). Part of a complex required for lens intermediate filament formation composed of BFSP1, BFSP2 and CRYAA (By similarity).</text>
</comment>
<comment type="interaction">
    <interactant intactId="EBI-7673244">
        <id>P24623</id>
    </interactant>
    <interactant intactId="EBI-7673124">
        <id>P07320</id>
        <label>CRYGD</label>
    </interactant>
    <organismsDiffer>true</organismsDiffer>
    <experiments>2</experiments>
</comment>
<comment type="subcellular location">
    <subcellularLocation>
        <location evidence="3">Cytoplasm</location>
    </subcellularLocation>
    <subcellularLocation>
        <location evidence="3">Nucleus</location>
    </subcellularLocation>
    <text evidence="3">Translocates to the nucleus during heat shock and resides in sub-nuclear structures known as SC35 speckles or nuclear splicing speckles.</text>
</comment>
<comment type="alternative products">
    <event type="alternative splicing"/>
    <isoform>
        <id>P24623-1</id>
        <name>1</name>
        <name>Minor</name>
        <name>Alpha-A(ins)</name>
        <sequence type="displayed"/>
    </isoform>
    <isoform>
        <id>P24623-2</id>
        <name>2</name>
        <name>Major</name>
        <sequence type="described" ref="VSP_011917"/>
    </isoform>
</comment>
<comment type="tissue specificity">
    <text evidence="8">Highly expressed in eye lens. Also expressed in non-lenticular tissues such as brain, spleen, liver, lung, skin, small intestine and a several epithelial and fibroblast cell lines with highest levels in spleen.</text>
</comment>
<comment type="PTM">
    <text evidence="3">Acetylation at Lys-93 may increase chaperone activity.</text>
</comment>
<comment type="PTM">
    <text evidence="6 7">Undergoes age-dependent proteolytical cleavage at the C-terminus. Cleavage by m-calpain produces specifically alpha-crystallin A(1-162), cleavage by Capn3/Lp82 produces specifically alpha-crystallin A(1-168) which is the major truncated form during normal maturation and induced cataract formation.</text>
</comment>
<comment type="miscellaneous">
    <text evidence="17">Lenses of streptozotocin-induced diabetic rats show increased levels of C-terminal truncated forms.</text>
</comment>
<comment type="similarity">
    <text evidence="4">Belongs to the small heat shock protein (HSP20) family.</text>
</comment>
<protein>
    <recommendedName>
        <fullName>Alpha-crystallin A chain</fullName>
    </recommendedName>
    <component>
        <recommendedName>
            <fullName>Alpha-crystallin A(1-168)</fullName>
        </recommendedName>
    </component>
    <component>
        <recommendedName>
            <fullName>Alpha-crystallin A(1-165)</fullName>
        </recommendedName>
    </component>
    <component>
        <recommendedName>
            <fullName>Alpha-crystallin A(1-163)</fullName>
        </recommendedName>
    </component>
    <component>
        <recommendedName>
            <fullName>Alpha-crystallin A(1-162)</fullName>
        </recommendedName>
    </component>
    <component>
        <recommendedName>
            <fullName>Alpha-crystallin A(1-157)</fullName>
        </recommendedName>
    </component>
    <component>
        <recommendedName>
            <fullName>Alpha-crystallin A(1-156)</fullName>
        </recommendedName>
    </component>
    <component>
        <recommendedName>
            <fullName>Alpha-crystallin A(1-151)</fullName>
        </recommendedName>
    </component>
</protein>
<organism>
    <name type="scientific">Rattus norvegicus</name>
    <name type="common">Rat</name>
    <dbReference type="NCBI Taxonomy" id="10116"/>
    <lineage>
        <taxon>Eukaryota</taxon>
        <taxon>Metazoa</taxon>
        <taxon>Chordata</taxon>
        <taxon>Craniata</taxon>
        <taxon>Vertebrata</taxon>
        <taxon>Euteleostomi</taxon>
        <taxon>Mammalia</taxon>
        <taxon>Eutheria</taxon>
        <taxon>Euarchontoglires</taxon>
        <taxon>Glires</taxon>
        <taxon>Rodentia</taxon>
        <taxon>Myomorpha</taxon>
        <taxon>Muroidea</taxon>
        <taxon>Muridae</taxon>
        <taxon>Murinae</taxon>
        <taxon>Rattus</taxon>
    </lineage>
</organism>
<reference key="1">
    <citation type="journal article" date="1990" name="Biochim. Biophys. Acta">
        <title>The alternative splicing product alpha Ains-crystallin is structurally equivalent to alpha A and alpha B subunits in the rat alpha-crystallin aggregate.</title>
        <authorList>
            <person name="Hendriks W."/>
            <person name="Weetink H."/>
            <person name="Voorter C.E.M."/>
            <person name="Sander J."/>
            <person name="Bloemendal H."/>
            <person name="de Jong W.W."/>
        </authorList>
    </citation>
    <scope>PROTEIN SEQUENCE (ISOFORMS 1 AND 2)</scope>
</reference>
<reference key="2">
    <citation type="journal article" date="1996" name="Protein Eng.">
        <title>Expression of recombinant alpha Ains-crystallin and not alpha A-crystallin inhibits bacterial growth.</title>
        <authorList>
            <person name="Bhat S.P."/>
            <person name="Nandy P."/>
            <person name="Srinivasan A."/>
            <person name="Cheng D."/>
            <person name="Sitay A."/>
        </authorList>
    </citation>
    <scope>NUCLEOTIDE SEQUENCE [MRNA] (ISOFORMS 1 AND 2)</scope>
    <scope>FUNCTION</scope>
    <source>
        <strain>Sprague-Dawley</strain>
        <tissue>Lens</tissue>
    </source>
</reference>
<reference key="3">
    <citation type="journal article" date="1981" name="Nucleic Acids Res.">
        <title>An unusually long non-coding region in rat lens alpha-crystallin messenger RNA.</title>
        <authorList>
            <person name="Moormann R.J.M."/>
            <person name="van der Velden H.M.W."/>
            <person name="Dodemont H.J."/>
            <person name="Andreoli P.M."/>
            <person name="Bloemendal H."/>
            <person name="Schoenmakers J.G.G."/>
        </authorList>
    </citation>
    <scope>NUCLEOTIDE SEQUENCE [MRNA] OF 53-196 (ISOFORM 2)</scope>
</reference>
<reference key="4">
    <citation type="journal article" date="1992" name="J. Biol. Chem.">
        <title>Alpha A-crystallin is expressed in non-ocular tissues.</title>
        <authorList>
            <person name="Srinivasan A.N."/>
            <person name="Nagineni C.N."/>
            <person name="Bhat S.P."/>
        </authorList>
    </citation>
    <scope>NUCLEOTIDE SEQUENCE [MRNA] OF 113-195 (ISOFORM 2)</scope>
    <scope>TISSUE SPECIFICITY</scope>
    <source>
        <strain>Sprague-Dawley</strain>
        <tissue>Eye</tissue>
        <tissue>Spleen</tissue>
    </source>
</reference>
<reference key="5">
    <citation type="journal article" date="1975" name="Eur. J. Biochem.">
        <title>Primary structures of the alpha-crystallin A chains of seven mammalian species.</title>
        <authorList>
            <person name="de Jong W.W."/>
            <person name="van der Ouderaa F.J."/>
            <person name="Versteeg M."/>
            <person name="Groenewoud G."/>
            <person name="van Amelsvoort J.M."/>
            <person name="Bloemendal H."/>
        </authorList>
    </citation>
    <scope>PROTEIN SEQUENCE OF 2-6; 13-16; 112-115 AND 169-173</scope>
    <scope>ACETYLATION AT MET-1</scope>
</reference>
<reference key="6">
    <citation type="journal article" date="1978" name="Eur. J. Biochem.">
        <title>Rat alpha-crystallin A chain with an insertion of 22 residues.</title>
        <authorList>
            <person name="Cohen L.H."/>
            <person name="Westerhuis L.W."/>
            <person name="de Jong W.W."/>
            <person name="Bloemendal H."/>
        </authorList>
    </citation>
    <scope>PRELIMINARY PROTEIN SEQUENCE (ISOFORM 1)</scope>
    <scope>ACETYLATION AT MET-1</scope>
</reference>
<reference key="7">
    <citation type="journal article" date="2002" name="Invest. Ophthalmol. Vis. Sci.">
        <title>Enhanced C-terminal truncation of alphaA- and alphaB-crystallins in diabetic lenses.</title>
        <authorList>
            <person name="Thampi P."/>
            <person name="Hassan A."/>
            <person name="Smith J.B."/>
            <person name="Abraham E.C."/>
        </authorList>
    </citation>
    <scope>PROTEOLYTIC PROCESSING</scope>
</reference>
<reference key="8">
    <citation type="journal article" date="2002" name="Mol. Cell. Proteomics">
        <title>Mass measurements of C-terminally truncated alpha-crystallins from two-dimensional gels identify Lp82 as a major endopeptidase in rat lens.</title>
        <authorList>
            <person name="Ueda Y."/>
            <person name="Fukiage C."/>
            <person name="Shih M."/>
            <person name="Shearer T.R."/>
            <person name="David L.L."/>
        </authorList>
    </citation>
    <scope>FUNCTION</scope>
    <scope>PROTEOLYTIC PROCESSING</scope>
</reference>
<name>CRYAA_RAT</name>
<feature type="chain" id="PRO_0000125883" description="Alpha-crystallin A chain">
    <location>
        <begin position="1"/>
        <end position="196"/>
    </location>
</feature>
<feature type="chain" id="PRO_0000423505" description="Alpha-crystallin A(1-168)">
    <location>
        <begin position="1"/>
        <end position="191"/>
    </location>
</feature>
<feature type="chain" id="PRO_0000423506" description="Alpha-crystallin A(1-165)">
    <location>
        <begin position="1"/>
        <end position="188"/>
    </location>
</feature>
<feature type="chain" id="PRO_0000423507" description="Alpha-crystallin A(1-163)">
    <location>
        <begin position="1"/>
        <end position="186"/>
    </location>
</feature>
<feature type="chain" id="PRO_0000423508" description="Alpha-crystallin A(1-162)">
    <location>
        <begin position="1"/>
        <end position="185"/>
    </location>
</feature>
<feature type="chain" id="PRO_0000423509" description="Alpha-crystallin A(1-157)">
    <location>
        <begin position="1"/>
        <end position="180"/>
    </location>
</feature>
<feature type="chain" id="PRO_0000423510" description="Alpha-crystallin A(1-156)">
    <location>
        <begin position="1"/>
        <end position="179"/>
    </location>
</feature>
<feature type="chain" id="PRO_0000423511" description="Alpha-crystallin A(1-151)">
    <location>
        <begin position="1"/>
        <end position="174"/>
    </location>
</feature>
<feature type="domain" description="sHSP" evidence="4">
    <location>
        <begin position="76"/>
        <end position="185"/>
    </location>
</feature>
<feature type="region of interest" description="Required for complex formation with BFSP1 and BFSP2" evidence="3">
    <location>
        <begin position="1"/>
        <end position="63"/>
    </location>
</feature>
<feature type="region of interest" description="Disordered" evidence="5">
    <location>
        <begin position="168"/>
        <end position="196"/>
    </location>
</feature>
<feature type="compositionally biased region" description="Basic and acidic residues" evidence="5">
    <location>
        <begin position="176"/>
        <end position="190"/>
    </location>
</feature>
<feature type="binding site" evidence="2">
    <location>
        <position position="123"/>
    </location>
    <ligand>
        <name>Zn(2+)</name>
        <dbReference type="ChEBI" id="CHEBI:29105"/>
        <label>1</label>
    </ligand>
</feature>
<feature type="binding site" evidence="2">
    <location>
        <position position="125"/>
    </location>
    <ligand>
        <name>Zn(2+)</name>
        <dbReference type="ChEBI" id="CHEBI:29105"/>
        <label>1</label>
    </ligand>
</feature>
<feature type="binding site" evidence="2">
    <location>
        <position position="130"/>
    </location>
    <ligand>
        <name>Zn(2+)</name>
        <dbReference type="ChEBI" id="CHEBI:29105"/>
        <label>2</label>
    </ligand>
</feature>
<feature type="binding site" evidence="2">
    <location>
        <position position="177"/>
    </location>
    <ligand>
        <name>Zn(2+)</name>
        <dbReference type="ChEBI" id="CHEBI:29105"/>
        <label>3</label>
    </ligand>
</feature>
<feature type="modified residue" description="N-acetylmethionine" evidence="9 11">
    <location>
        <position position="1"/>
    </location>
</feature>
<feature type="modified residue" description="Deamidated glutamine; partial" evidence="1">
    <location>
        <position position="6"/>
    </location>
</feature>
<feature type="modified residue" description="Phosphoserine" evidence="3">
    <location>
        <position position="45"/>
    </location>
</feature>
<feature type="modified residue" description="Deamidated glutamine; partial" evidence="1">
    <location>
        <position position="50"/>
    </location>
</feature>
<feature type="modified residue" description="N6-acetyllysine" evidence="3">
    <location>
        <position position="93"/>
    </location>
</feature>
<feature type="modified residue" description="N6-acetyllysine" evidence="3">
    <location>
        <position position="122"/>
    </location>
</feature>
<feature type="modified residue" description="Deamidated asparagine; partial" evidence="1">
    <location>
        <position position="124"/>
    </location>
</feature>
<feature type="modified residue" description="Phosphoserine" evidence="2">
    <location>
        <position position="145"/>
    </location>
</feature>
<feature type="modified residue" description="Deamidated asparagine; partial" evidence="1">
    <location>
        <position position="146"/>
    </location>
</feature>
<feature type="modified residue" description="Deamidated glutamine; partial" evidence="1">
    <location>
        <position position="170"/>
    </location>
</feature>
<feature type="glycosylation site" description="O-linked (GlcNAc) serine" evidence="1">
    <location>
        <position position="185"/>
    </location>
</feature>
<feature type="splice variant" id="VSP_011917" description="In isoform 2." evidence="12 13 14 15">
    <location>
        <begin position="64"/>
        <end position="86"/>
    </location>
</feature>
<feature type="sequence conflict" description="In Ref. 4; AAA40645." evidence="16" ref="4">
    <original>V</original>
    <variation>M</variation>
    <location>
        <position position="147"/>
    </location>
</feature>
<dbReference type="EMBL" id="U47921">
    <property type="protein sequence ID" value="AAA93366.1"/>
    <property type="molecule type" value="mRNA"/>
</dbReference>
<dbReference type="EMBL" id="U47922">
    <property type="protein sequence ID" value="AAA93367.1"/>
    <property type="molecule type" value="mRNA"/>
</dbReference>
<dbReference type="EMBL" id="V01219">
    <property type="protein sequence ID" value="CAA24530.1"/>
    <property type="molecule type" value="mRNA"/>
</dbReference>
<dbReference type="EMBL" id="M96949">
    <property type="protein sequence ID" value="AAA40644.1"/>
    <property type="molecule type" value="mRNA"/>
</dbReference>
<dbReference type="EMBL" id="M96950">
    <property type="protein sequence ID" value="AAA40645.1"/>
    <property type="molecule type" value="mRNA"/>
</dbReference>
<dbReference type="PIR" id="A02892">
    <property type="entry name" value="CYRTA"/>
</dbReference>
<dbReference type="PIR" id="A02899">
    <property type="entry name" value="CYRTAM"/>
</dbReference>
<dbReference type="PIR" id="S07530">
    <property type="entry name" value="S07530"/>
</dbReference>
<dbReference type="RefSeq" id="NP_001276666.1">
    <molecule id="P24623-1"/>
    <property type="nucleotide sequence ID" value="NM_001289737.2"/>
</dbReference>
<dbReference type="RefSeq" id="NP_036666.2">
    <molecule id="P24623-2"/>
    <property type="nucleotide sequence ID" value="NM_012534.4"/>
</dbReference>
<dbReference type="SMR" id="P24623"/>
<dbReference type="BioGRID" id="246457">
    <property type="interactions" value="1"/>
</dbReference>
<dbReference type="FunCoup" id="P24623">
    <property type="interactions" value="177"/>
</dbReference>
<dbReference type="IntAct" id="P24623">
    <property type="interactions" value="1"/>
</dbReference>
<dbReference type="MINT" id="P24623"/>
<dbReference type="STRING" id="10116.ENSRNOP00000065714"/>
<dbReference type="GlyConnect" id="34">
    <property type="glycosylation" value="1 O-GlcNAc glycan"/>
</dbReference>
<dbReference type="GlyCosmos" id="P24623">
    <property type="glycosylation" value="1 site, 1 glycan"/>
</dbReference>
<dbReference type="GlyGen" id="P24623">
    <property type="glycosylation" value="2 sites, 1 O-linked glycan (1 site)"/>
</dbReference>
<dbReference type="iPTMnet" id="P24623"/>
<dbReference type="PhosphoSitePlus" id="P24623"/>
<dbReference type="PaxDb" id="10116-ENSRNOP00000065714"/>
<dbReference type="DNASU" id="24273"/>
<dbReference type="GeneID" id="24273"/>
<dbReference type="KEGG" id="rno:24273"/>
<dbReference type="AGR" id="RGD:2413"/>
<dbReference type="CTD" id="1409"/>
<dbReference type="RGD" id="2413">
    <property type="gene designation" value="Cryaa"/>
</dbReference>
<dbReference type="eggNOG" id="KOG3591">
    <property type="taxonomic scope" value="Eukaryota"/>
</dbReference>
<dbReference type="HOGENOM" id="CLU_095001_2_0_1"/>
<dbReference type="InParanoid" id="P24623"/>
<dbReference type="OrthoDB" id="3740at9989"/>
<dbReference type="PhylomeDB" id="P24623"/>
<dbReference type="PRO" id="PR:P24623"/>
<dbReference type="Proteomes" id="UP000002494">
    <property type="component" value="Chromosome 20"/>
</dbReference>
<dbReference type="Bgee" id="ENSRNOG00000047175">
    <property type="expression patterns" value="Expressed in spleen and 2 other cell types or tissues"/>
</dbReference>
<dbReference type="ExpressionAtlas" id="P24623">
    <property type="expression patterns" value="baseline and differential"/>
</dbReference>
<dbReference type="GO" id="GO:0005737">
    <property type="term" value="C:cytoplasm"/>
    <property type="evidence" value="ECO:0000266"/>
    <property type="project" value="RGD"/>
</dbReference>
<dbReference type="GO" id="GO:0005634">
    <property type="term" value="C:nucleus"/>
    <property type="evidence" value="ECO:0000250"/>
    <property type="project" value="UniProtKB"/>
</dbReference>
<dbReference type="GO" id="GO:0032991">
    <property type="term" value="C:protein-containing complex"/>
    <property type="evidence" value="ECO:0000266"/>
    <property type="project" value="RGD"/>
</dbReference>
<dbReference type="GO" id="GO:0042802">
    <property type="term" value="F:identical protein binding"/>
    <property type="evidence" value="ECO:0000353"/>
    <property type="project" value="RGD"/>
</dbReference>
<dbReference type="GO" id="GO:0046872">
    <property type="term" value="F:metal ion binding"/>
    <property type="evidence" value="ECO:0007669"/>
    <property type="project" value="UniProtKB-KW"/>
</dbReference>
<dbReference type="GO" id="GO:0005212">
    <property type="term" value="F:structural constituent of eye lens"/>
    <property type="evidence" value="ECO:0000304"/>
    <property type="project" value="RGD"/>
</dbReference>
<dbReference type="GO" id="GO:0005198">
    <property type="term" value="F:structural molecule activity"/>
    <property type="evidence" value="ECO:0000266"/>
    <property type="project" value="RGD"/>
</dbReference>
<dbReference type="GO" id="GO:0051082">
    <property type="term" value="F:unfolded protein binding"/>
    <property type="evidence" value="ECO:0000266"/>
    <property type="project" value="RGD"/>
</dbReference>
<dbReference type="GO" id="GO:0007015">
    <property type="term" value="P:actin filament organization"/>
    <property type="evidence" value="ECO:0000266"/>
    <property type="project" value="RGD"/>
</dbReference>
<dbReference type="GO" id="GO:0006915">
    <property type="term" value="P:apoptotic process"/>
    <property type="evidence" value="ECO:0000266"/>
    <property type="project" value="RGD"/>
</dbReference>
<dbReference type="GO" id="GO:0060561">
    <property type="term" value="P:apoptotic process involved in morphogenesis"/>
    <property type="evidence" value="ECO:0000266"/>
    <property type="project" value="RGD"/>
</dbReference>
<dbReference type="GO" id="GO:0043010">
    <property type="term" value="P:camera-type eye development"/>
    <property type="evidence" value="ECO:0000266"/>
    <property type="project" value="RGD"/>
</dbReference>
<dbReference type="GO" id="GO:0048596">
    <property type="term" value="P:embryonic camera-type eye morphogenesis"/>
    <property type="evidence" value="ECO:0000266"/>
    <property type="project" value="RGD"/>
</dbReference>
<dbReference type="GO" id="GO:0002088">
    <property type="term" value="P:lens development in camera-type eye"/>
    <property type="evidence" value="ECO:0000270"/>
    <property type="project" value="RGD"/>
</dbReference>
<dbReference type="GO" id="GO:0070309">
    <property type="term" value="P:lens fiber cell morphogenesis"/>
    <property type="evidence" value="ECO:0000266"/>
    <property type="project" value="RGD"/>
</dbReference>
<dbReference type="GO" id="GO:0002089">
    <property type="term" value="P:lens morphogenesis in camera-type eye"/>
    <property type="evidence" value="ECO:0000266"/>
    <property type="project" value="RGD"/>
</dbReference>
<dbReference type="GO" id="GO:0007017">
    <property type="term" value="P:microtubule-based process"/>
    <property type="evidence" value="ECO:0000266"/>
    <property type="project" value="RGD"/>
</dbReference>
<dbReference type="GO" id="GO:0007005">
    <property type="term" value="P:mitochondrion organization"/>
    <property type="evidence" value="ECO:0000266"/>
    <property type="project" value="RGD"/>
</dbReference>
<dbReference type="GO" id="GO:0043066">
    <property type="term" value="P:negative regulation of apoptotic process"/>
    <property type="evidence" value="ECO:0000266"/>
    <property type="project" value="RGD"/>
</dbReference>
<dbReference type="GO" id="GO:0010629">
    <property type="term" value="P:negative regulation of gene expression"/>
    <property type="evidence" value="ECO:0000266"/>
    <property type="project" value="RGD"/>
</dbReference>
<dbReference type="GO" id="GO:0032387">
    <property type="term" value="P:negative regulation of intracellular transport"/>
    <property type="evidence" value="ECO:0000266"/>
    <property type="project" value="RGD"/>
</dbReference>
<dbReference type="GO" id="GO:0030307">
    <property type="term" value="P:positive regulation of cell growth"/>
    <property type="evidence" value="ECO:0000266"/>
    <property type="project" value="RGD"/>
</dbReference>
<dbReference type="GO" id="GO:0006457">
    <property type="term" value="P:protein folding"/>
    <property type="evidence" value="ECO:0000314"/>
    <property type="project" value="RGD"/>
</dbReference>
<dbReference type="GO" id="GO:0042026">
    <property type="term" value="P:protein refolding"/>
    <property type="evidence" value="ECO:0000318"/>
    <property type="project" value="GO_Central"/>
</dbReference>
<dbReference type="GO" id="GO:0050821">
    <property type="term" value="P:protein stabilization"/>
    <property type="evidence" value="ECO:0000266"/>
    <property type="project" value="RGD"/>
</dbReference>
<dbReference type="GO" id="GO:0051384">
    <property type="term" value="P:response to glucocorticoid"/>
    <property type="evidence" value="ECO:0000270"/>
    <property type="project" value="RGD"/>
</dbReference>
<dbReference type="GO" id="GO:0009408">
    <property type="term" value="P:response to heat"/>
    <property type="evidence" value="ECO:0000318"/>
    <property type="project" value="GO_Central"/>
</dbReference>
<dbReference type="GO" id="GO:0042542">
    <property type="term" value="P:response to hydrogen peroxide"/>
    <property type="evidence" value="ECO:0000314"/>
    <property type="project" value="RGD"/>
</dbReference>
<dbReference type="GO" id="GO:0001666">
    <property type="term" value="P:response to hypoxia"/>
    <property type="evidence" value="ECO:0000266"/>
    <property type="project" value="RGD"/>
</dbReference>
<dbReference type="GO" id="GO:0010288">
    <property type="term" value="P:response to lead ion"/>
    <property type="evidence" value="ECO:0000270"/>
    <property type="project" value="RGD"/>
</dbReference>
<dbReference type="GO" id="GO:0070141">
    <property type="term" value="P:response to UV-A"/>
    <property type="evidence" value="ECO:0000266"/>
    <property type="project" value="RGD"/>
</dbReference>
<dbReference type="GO" id="GO:0009410">
    <property type="term" value="P:response to xenobiotic stimulus"/>
    <property type="evidence" value="ECO:0000270"/>
    <property type="project" value="RGD"/>
</dbReference>
<dbReference type="GO" id="GO:0007021">
    <property type="term" value="P:tubulin complex assembly"/>
    <property type="evidence" value="ECO:0000266"/>
    <property type="project" value="RGD"/>
</dbReference>
<dbReference type="GO" id="GO:0007601">
    <property type="term" value="P:visual perception"/>
    <property type="evidence" value="ECO:0000266"/>
    <property type="project" value="RGD"/>
</dbReference>
<dbReference type="FunFam" id="2.60.40.790:FF:000008">
    <property type="entry name" value="Alpha-crystallin A chain"/>
    <property type="match status" value="1"/>
</dbReference>
<dbReference type="Gene3D" id="2.60.40.790">
    <property type="match status" value="1"/>
</dbReference>
<dbReference type="InterPro" id="IPR002068">
    <property type="entry name" value="A-crystallin/Hsp20_dom"/>
</dbReference>
<dbReference type="InterPro" id="IPR001436">
    <property type="entry name" value="Alpha-crystallin/sHSP_animal"/>
</dbReference>
<dbReference type="InterPro" id="IPR003090">
    <property type="entry name" value="Alpha-crystallin_N"/>
</dbReference>
<dbReference type="InterPro" id="IPR008978">
    <property type="entry name" value="HSP20-like_chaperone"/>
</dbReference>
<dbReference type="PANTHER" id="PTHR45640:SF14">
    <property type="entry name" value="ALPHA-CRYSTALLIN A CHAIN"/>
    <property type="match status" value="1"/>
</dbReference>
<dbReference type="PANTHER" id="PTHR45640">
    <property type="entry name" value="HEAT SHOCK PROTEIN HSP-12.2-RELATED"/>
    <property type="match status" value="1"/>
</dbReference>
<dbReference type="Pfam" id="PF00525">
    <property type="entry name" value="Crystallin"/>
    <property type="match status" value="1"/>
</dbReference>
<dbReference type="Pfam" id="PF00011">
    <property type="entry name" value="HSP20"/>
    <property type="match status" value="1"/>
</dbReference>
<dbReference type="PRINTS" id="PR00299">
    <property type="entry name" value="ACRYSTALLIN"/>
</dbReference>
<dbReference type="SUPFAM" id="SSF49764">
    <property type="entry name" value="HSP20-like chaperones"/>
    <property type="match status" value="1"/>
</dbReference>
<dbReference type="PROSITE" id="PS01031">
    <property type="entry name" value="SHSP"/>
    <property type="match status" value="1"/>
</dbReference>
<gene>
    <name type="primary">Cryaa</name>
    <name type="synonym">Crya1</name>
</gene>
<accession>P24623</accession>
<accession>P02490</accession>
<accession>P02496</accession>
<accession>P82532</accession>
<accession>Q61444</accession>
<sequence length="196" mass="22447">MDVTIQHPWFKRALGPFYPSRLFDQFFGEGLFEYDLLPFLSSTISPYYRQSLFRTVLDSGISELMTHMWFVMHQPHAGNPKNNPGKVRSDRDKFVIFLDVKHFSPEDLTVKVLEDFVEIHGKHNERQDDHGYISREFHRRYRLPSNVDQSALSCSLSADGMLTFSGPKVQSGLDAGHSERAIPVSREEKPSSAPSS</sequence>